<keyword id="KW-0687">Ribonucleoprotein</keyword>
<keyword id="KW-0689">Ribosomal protein</keyword>
<keyword id="KW-0694">RNA-binding</keyword>
<keyword id="KW-0699">rRNA-binding</keyword>
<sequence length="208" mass="23983">MNRKSIAKGKLVRRFGVNIFEQPKYDKLLKKKPNPPGMHGRSRRTKVTEYGKQLIEKQKVKFTYGVSERQLTNVFKEARRQHGVTGDNLLALLERRIDNIVYRAGFAISRAHARQIVSHGIIILNGRRVTIPSITLRANDIIQVKEKDSLKKLVRSNIEKTSTLRKLPDWIEVNADALNVKIIRTPSRDEIPTLANEQMIVEYYSKRA</sequence>
<proteinExistence type="inferred from homology"/>
<accession>B5RMG4</accession>
<comment type="function">
    <text evidence="1">One of the primary rRNA binding proteins, it binds directly to 16S rRNA where it nucleates assembly of the body of the 30S subunit.</text>
</comment>
<comment type="function">
    <text evidence="1">With S5 and S12 plays an important role in translational accuracy.</text>
</comment>
<comment type="subunit">
    <text evidence="1">Part of the 30S ribosomal subunit. Contacts protein S5. The interaction surface between S4 and S5 is involved in control of translational fidelity.</text>
</comment>
<comment type="similarity">
    <text evidence="1">Belongs to the universal ribosomal protein uS4 family.</text>
</comment>
<organism>
    <name type="scientific">Borrelia duttonii (strain Ly)</name>
    <dbReference type="NCBI Taxonomy" id="412419"/>
    <lineage>
        <taxon>Bacteria</taxon>
        <taxon>Pseudomonadati</taxon>
        <taxon>Spirochaetota</taxon>
        <taxon>Spirochaetia</taxon>
        <taxon>Spirochaetales</taxon>
        <taxon>Borreliaceae</taxon>
        <taxon>Borrelia</taxon>
    </lineage>
</organism>
<gene>
    <name evidence="1" type="primary">rpsD</name>
    <name type="ordered locus">BDU_617</name>
</gene>
<evidence type="ECO:0000255" key="1">
    <source>
        <dbReference type="HAMAP-Rule" id="MF_01306"/>
    </source>
</evidence>
<evidence type="ECO:0000305" key="2"/>
<dbReference type="EMBL" id="CP000976">
    <property type="protein sequence ID" value="ACH93550.1"/>
    <property type="molecule type" value="Genomic_DNA"/>
</dbReference>
<dbReference type="RefSeq" id="WP_012538359.1">
    <property type="nucleotide sequence ID" value="NC_011229.1"/>
</dbReference>
<dbReference type="SMR" id="B5RMG4"/>
<dbReference type="STRING" id="412419.BDU_617"/>
<dbReference type="KEGG" id="bdu:BDU_617"/>
<dbReference type="eggNOG" id="COG0522">
    <property type="taxonomic scope" value="Bacteria"/>
</dbReference>
<dbReference type="HOGENOM" id="CLU_092403_0_4_12"/>
<dbReference type="OrthoDB" id="9803672at2"/>
<dbReference type="Proteomes" id="UP000000611">
    <property type="component" value="Chromosome"/>
</dbReference>
<dbReference type="GO" id="GO:0015935">
    <property type="term" value="C:small ribosomal subunit"/>
    <property type="evidence" value="ECO:0007669"/>
    <property type="project" value="InterPro"/>
</dbReference>
<dbReference type="GO" id="GO:0019843">
    <property type="term" value="F:rRNA binding"/>
    <property type="evidence" value="ECO:0007669"/>
    <property type="project" value="UniProtKB-UniRule"/>
</dbReference>
<dbReference type="GO" id="GO:0003735">
    <property type="term" value="F:structural constituent of ribosome"/>
    <property type="evidence" value="ECO:0007669"/>
    <property type="project" value="InterPro"/>
</dbReference>
<dbReference type="GO" id="GO:0042274">
    <property type="term" value="P:ribosomal small subunit biogenesis"/>
    <property type="evidence" value="ECO:0007669"/>
    <property type="project" value="TreeGrafter"/>
</dbReference>
<dbReference type="GO" id="GO:0006412">
    <property type="term" value="P:translation"/>
    <property type="evidence" value="ECO:0007669"/>
    <property type="project" value="UniProtKB-UniRule"/>
</dbReference>
<dbReference type="CDD" id="cd00165">
    <property type="entry name" value="S4"/>
    <property type="match status" value="1"/>
</dbReference>
<dbReference type="FunFam" id="3.10.290.10:FF:000001">
    <property type="entry name" value="30S ribosomal protein S4"/>
    <property type="match status" value="1"/>
</dbReference>
<dbReference type="Gene3D" id="1.10.1050.10">
    <property type="entry name" value="Ribosomal Protein S4 Delta 41, Chain A, domain 1"/>
    <property type="match status" value="1"/>
</dbReference>
<dbReference type="Gene3D" id="3.10.290.10">
    <property type="entry name" value="RNA-binding S4 domain"/>
    <property type="match status" value="1"/>
</dbReference>
<dbReference type="HAMAP" id="MF_01306_B">
    <property type="entry name" value="Ribosomal_uS4_B"/>
    <property type="match status" value="1"/>
</dbReference>
<dbReference type="InterPro" id="IPR022801">
    <property type="entry name" value="Ribosomal_uS4"/>
</dbReference>
<dbReference type="InterPro" id="IPR005709">
    <property type="entry name" value="Ribosomal_uS4_bac-type"/>
</dbReference>
<dbReference type="InterPro" id="IPR018079">
    <property type="entry name" value="Ribosomal_uS4_CS"/>
</dbReference>
<dbReference type="InterPro" id="IPR001912">
    <property type="entry name" value="Ribosomal_uS4_N"/>
</dbReference>
<dbReference type="InterPro" id="IPR002942">
    <property type="entry name" value="S4_RNA-bd"/>
</dbReference>
<dbReference type="InterPro" id="IPR036986">
    <property type="entry name" value="S4_RNA-bd_sf"/>
</dbReference>
<dbReference type="NCBIfam" id="NF003717">
    <property type="entry name" value="PRK05327.1"/>
    <property type="match status" value="1"/>
</dbReference>
<dbReference type="NCBIfam" id="TIGR01017">
    <property type="entry name" value="rpsD_bact"/>
    <property type="match status" value="1"/>
</dbReference>
<dbReference type="PANTHER" id="PTHR11831">
    <property type="entry name" value="30S 40S RIBOSOMAL PROTEIN"/>
    <property type="match status" value="1"/>
</dbReference>
<dbReference type="PANTHER" id="PTHR11831:SF4">
    <property type="entry name" value="SMALL RIBOSOMAL SUBUNIT PROTEIN US4M"/>
    <property type="match status" value="1"/>
</dbReference>
<dbReference type="Pfam" id="PF00163">
    <property type="entry name" value="Ribosomal_S4"/>
    <property type="match status" value="1"/>
</dbReference>
<dbReference type="Pfam" id="PF01479">
    <property type="entry name" value="S4"/>
    <property type="match status" value="1"/>
</dbReference>
<dbReference type="SMART" id="SM01390">
    <property type="entry name" value="Ribosomal_S4"/>
    <property type="match status" value="1"/>
</dbReference>
<dbReference type="SMART" id="SM00363">
    <property type="entry name" value="S4"/>
    <property type="match status" value="1"/>
</dbReference>
<dbReference type="SUPFAM" id="SSF55174">
    <property type="entry name" value="Alpha-L RNA-binding motif"/>
    <property type="match status" value="1"/>
</dbReference>
<dbReference type="PROSITE" id="PS00632">
    <property type="entry name" value="RIBOSOMAL_S4"/>
    <property type="match status" value="1"/>
</dbReference>
<dbReference type="PROSITE" id="PS50889">
    <property type="entry name" value="S4"/>
    <property type="match status" value="1"/>
</dbReference>
<feature type="chain" id="PRO_1000140691" description="Small ribosomal subunit protein uS4">
    <location>
        <begin position="1"/>
        <end position="208"/>
    </location>
</feature>
<feature type="domain" description="S4 RNA-binding" evidence="1">
    <location>
        <begin position="95"/>
        <end position="157"/>
    </location>
</feature>
<reference key="1">
    <citation type="journal article" date="2008" name="PLoS Genet.">
        <title>The genome of Borrelia recurrentis, the agent of deadly louse-borne relapsing fever, is a degraded subset of tick-borne Borrelia duttonii.</title>
        <authorList>
            <person name="Lescot M."/>
            <person name="Audic S."/>
            <person name="Robert C."/>
            <person name="Nguyen T.T."/>
            <person name="Blanc G."/>
            <person name="Cutler S.J."/>
            <person name="Wincker P."/>
            <person name="Couloux A."/>
            <person name="Claverie J.-M."/>
            <person name="Raoult D."/>
            <person name="Drancourt M."/>
        </authorList>
    </citation>
    <scope>NUCLEOTIDE SEQUENCE [LARGE SCALE GENOMIC DNA]</scope>
    <source>
        <strain>Ly</strain>
    </source>
</reference>
<name>RS4_BORDL</name>
<protein>
    <recommendedName>
        <fullName evidence="1">Small ribosomal subunit protein uS4</fullName>
    </recommendedName>
    <alternativeName>
        <fullName evidence="2">30S ribosomal protein S4</fullName>
    </alternativeName>
</protein>